<name>RS14_MYCUA</name>
<organism>
    <name type="scientific">Mycobacterium ulcerans (strain Agy99)</name>
    <dbReference type="NCBI Taxonomy" id="362242"/>
    <lineage>
        <taxon>Bacteria</taxon>
        <taxon>Bacillati</taxon>
        <taxon>Actinomycetota</taxon>
        <taxon>Actinomycetes</taxon>
        <taxon>Mycobacteriales</taxon>
        <taxon>Mycobacteriaceae</taxon>
        <taxon>Mycobacterium</taxon>
        <taxon>Mycobacterium ulcerans group</taxon>
    </lineage>
</organism>
<dbReference type="EMBL" id="CP000325">
    <property type="protein sequence ID" value="ABL06739.1"/>
    <property type="molecule type" value="Genomic_DNA"/>
</dbReference>
<dbReference type="RefSeq" id="WP_011742331.1">
    <property type="nucleotide sequence ID" value="NC_008611.1"/>
</dbReference>
<dbReference type="SMR" id="A0PWM0"/>
<dbReference type="GeneID" id="93439327"/>
<dbReference type="KEGG" id="mul:MUL_4833"/>
<dbReference type="eggNOG" id="COG0199">
    <property type="taxonomic scope" value="Bacteria"/>
</dbReference>
<dbReference type="HOGENOM" id="CLU_139869_0_1_11"/>
<dbReference type="Proteomes" id="UP000000765">
    <property type="component" value="Chromosome"/>
</dbReference>
<dbReference type="GO" id="GO:0015935">
    <property type="term" value="C:small ribosomal subunit"/>
    <property type="evidence" value="ECO:0007669"/>
    <property type="project" value="TreeGrafter"/>
</dbReference>
<dbReference type="GO" id="GO:0019843">
    <property type="term" value="F:rRNA binding"/>
    <property type="evidence" value="ECO:0007669"/>
    <property type="project" value="UniProtKB-UniRule"/>
</dbReference>
<dbReference type="GO" id="GO:0003735">
    <property type="term" value="F:structural constituent of ribosome"/>
    <property type="evidence" value="ECO:0007669"/>
    <property type="project" value="InterPro"/>
</dbReference>
<dbReference type="GO" id="GO:0006412">
    <property type="term" value="P:translation"/>
    <property type="evidence" value="ECO:0007669"/>
    <property type="project" value="UniProtKB-UniRule"/>
</dbReference>
<dbReference type="FunFam" id="1.10.287.1480:FF:000001">
    <property type="entry name" value="30S ribosomal protein S14"/>
    <property type="match status" value="1"/>
</dbReference>
<dbReference type="Gene3D" id="1.10.287.1480">
    <property type="match status" value="1"/>
</dbReference>
<dbReference type="HAMAP" id="MF_00537">
    <property type="entry name" value="Ribosomal_uS14_1"/>
    <property type="match status" value="1"/>
</dbReference>
<dbReference type="InterPro" id="IPR001209">
    <property type="entry name" value="Ribosomal_uS14"/>
</dbReference>
<dbReference type="InterPro" id="IPR023036">
    <property type="entry name" value="Ribosomal_uS14_bac/plastid"/>
</dbReference>
<dbReference type="NCBIfam" id="NF006477">
    <property type="entry name" value="PRK08881.1"/>
    <property type="match status" value="1"/>
</dbReference>
<dbReference type="PANTHER" id="PTHR19836">
    <property type="entry name" value="30S RIBOSOMAL PROTEIN S14"/>
    <property type="match status" value="1"/>
</dbReference>
<dbReference type="PANTHER" id="PTHR19836:SF23">
    <property type="entry name" value="SMALL RIBOSOMAL SUBUNIT PROTEIN US14A"/>
    <property type="match status" value="1"/>
</dbReference>
<dbReference type="Pfam" id="PF00253">
    <property type="entry name" value="Ribosomal_S14"/>
    <property type="match status" value="1"/>
</dbReference>
<dbReference type="SUPFAM" id="SSF57716">
    <property type="entry name" value="Glucocorticoid receptor-like (DNA-binding domain)"/>
    <property type="match status" value="1"/>
</dbReference>
<proteinExistence type="inferred from homology"/>
<gene>
    <name evidence="1" type="primary">rpsN</name>
    <name type="ordered locus">MUL_4833</name>
</gene>
<protein>
    <recommendedName>
        <fullName evidence="1">Small ribosomal subunit protein uS14A</fullName>
    </recommendedName>
    <alternativeName>
        <fullName evidence="3">30S ribosomal protein S14</fullName>
    </alternativeName>
</protein>
<accession>A0PWM0</accession>
<comment type="function">
    <text evidence="1">Binds 16S rRNA, required for the assembly of 30S particles and may also be responsible for determining the conformation of the 16S rRNA at the A site.</text>
</comment>
<comment type="subunit">
    <text evidence="1">Part of the 30S ribosomal subunit. Contacts proteins S3 and S10.</text>
</comment>
<comment type="similarity">
    <text evidence="1">Belongs to the universal ribosomal protein uS14 family.</text>
</comment>
<sequence>MAKKSKIVKNNKRRDIVARYAQRRAELKQIIQSPTSSYEQRLDAQRALSRQPRDASAVRLRNRDAIDGRPRGHLRKFGLSRVRVRELAHAGQLPGVRKASW</sequence>
<keyword id="KW-0687">Ribonucleoprotein</keyword>
<keyword id="KW-0689">Ribosomal protein</keyword>
<keyword id="KW-0694">RNA-binding</keyword>
<keyword id="KW-0699">rRNA-binding</keyword>
<feature type="chain" id="PRO_1000128458" description="Small ribosomal subunit protein uS14A">
    <location>
        <begin position="1"/>
        <end position="101"/>
    </location>
</feature>
<feature type="region of interest" description="Disordered" evidence="2">
    <location>
        <begin position="35"/>
        <end position="56"/>
    </location>
</feature>
<evidence type="ECO:0000255" key="1">
    <source>
        <dbReference type="HAMAP-Rule" id="MF_00537"/>
    </source>
</evidence>
<evidence type="ECO:0000256" key="2">
    <source>
        <dbReference type="SAM" id="MobiDB-lite"/>
    </source>
</evidence>
<evidence type="ECO:0000305" key="3"/>
<reference key="1">
    <citation type="journal article" date="2007" name="Genome Res.">
        <title>Reductive evolution and niche adaptation inferred from the genome of Mycobacterium ulcerans, the causative agent of Buruli ulcer.</title>
        <authorList>
            <person name="Stinear T.P."/>
            <person name="Seemann T."/>
            <person name="Pidot S."/>
            <person name="Frigui W."/>
            <person name="Reysset G."/>
            <person name="Garnier T."/>
            <person name="Meurice G."/>
            <person name="Simon D."/>
            <person name="Bouchier C."/>
            <person name="Ma L."/>
            <person name="Tichit M."/>
            <person name="Porter J.L."/>
            <person name="Ryan J."/>
            <person name="Johnson P.D.R."/>
            <person name="Davies J.K."/>
            <person name="Jenkin G.A."/>
            <person name="Small P.L.C."/>
            <person name="Jones L.M."/>
            <person name="Tekaia F."/>
            <person name="Laval F."/>
            <person name="Daffe M."/>
            <person name="Parkhill J."/>
            <person name="Cole S.T."/>
        </authorList>
    </citation>
    <scope>NUCLEOTIDE SEQUENCE [LARGE SCALE GENOMIC DNA]</scope>
    <source>
        <strain>Agy99</strain>
    </source>
</reference>